<feature type="chain" id="PRO_0000295406" description="Protein transport protein sec13">
    <location>
        <begin position="1"/>
        <end position="294"/>
    </location>
</feature>
<feature type="repeat" description="WD 1">
    <location>
        <begin position="1"/>
        <end position="35"/>
    </location>
</feature>
<feature type="repeat" description="WD 2">
    <location>
        <begin position="40"/>
        <end position="81"/>
    </location>
</feature>
<feature type="repeat" description="WD 3">
    <location>
        <begin position="95"/>
        <end position="136"/>
    </location>
</feature>
<feature type="repeat" description="WD 4">
    <location>
        <begin position="140"/>
        <end position="194"/>
    </location>
</feature>
<feature type="repeat" description="WD 5">
    <location>
        <begin position="201"/>
        <end position="243"/>
    </location>
</feature>
<feature type="repeat" description="WD 6">
    <location>
        <begin position="249"/>
        <end position="288"/>
    </location>
</feature>
<organism>
    <name type="scientific">Aspergillus oryzae (strain ATCC 42149 / RIB 40)</name>
    <name type="common">Yellow koji mold</name>
    <dbReference type="NCBI Taxonomy" id="510516"/>
    <lineage>
        <taxon>Eukaryota</taxon>
        <taxon>Fungi</taxon>
        <taxon>Dikarya</taxon>
        <taxon>Ascomycota</taxon>
        <taxon>Pezizomycotina</taxon>
        <taxon>Eurotiomycetes</taxon>
        <taxon>Eurotiomycetidae</taxon>
        <taxon>Eurotiales</taxon>
        <taxon>Aspergillaceae</taxon>
        <taxon>Aspergillus</taxon>
        <taxon>Aspergillus subgen. Circumdati</taxon>
    </lineage>
</organism>
<evidence type="ECO:0000250" key="1"/>
<evidence type="ECO:0000250" key="2">
    <source>
        <dbReference type="UniProtKB" id="Q04491"/>
    </source>
</evidence>
<evidence type="ECO:0000305" key="3"/>
<dbReference type="EMBL" id="BA000051">
    <property type="protein sequence ID" value="BAE59472.1"/>
    <property type="molecule type" value="Genomic_DNA"/>
</dbReference>
<dbReference type="SMR" id="Q2UG43"/>
<dbReference type="STRING" id="510516.Q2UG43"/>
<dbReference type="EnsemblFungi" id="BAE59472">
    <property type="protein sequence ID" value="BAE59472"/>
    <property type="gene ID" value="AO090023000986"/>
</dbReference>
<dbReference type="HOGENOM" id="CLU_032441_0_1_1"/>
<dbReference type="Proteomes" id="UP000006564">
    <property type="component" value="Chromosome 3"/>
</dbReference>
<dbReference type="GO" id="GO:0030127">
    <property type="term" value="C:COPII vesicle coat"/>
    <property type="evidence" value="ECO:0007669"/>
    <property type="project" value="EnsemblFungi"/>
</dbReference>
<dbReference type="GO" id="GO:0005789">
    <property type="term" value="C:endoplasmic reticulum membrane"/>
    <property type="evidence" value="ECO:0007669"/>
    <property type="project" value="UniProtKB-SubCell"/>
</dbReference>
<dbReference type="GO" id="GO:0061700">
    <property type="term" value="C:GATOR2 complex"/>
    <property type="evidence" value="ECO:0007669"/>
    <property type="project" value="EnsemblFungi"/>
</dbReference>
<dbReference type="GO" id="GO:0031080">
    <property type="term" value="C:nuclear pore outer ring"/>
    <property type="evidence" value="ECO:0007669"/>
    <property type="project" value="EnsemblFungi"/>
</dbReference>
<dbReference type="GO" id="GO:0005198">
    <property type="term" value="F:structural molecule activity"/>
    <property type="evidence" value="ECO:0007669"/>
    <property type="project" value="EnsemblFungi"/>
</dbReference>
<dbReference type="GO" id="GO:0090114">
    <property type="term" value="P:COPII-coated vesicle budding"/>
    <property type="evidence" value="ECO:0007669"/>
    <property type="project" value="EnsemblFungi"/>
</dbReference>
<dbReference type="GO" id="GO:0036503">
    <property type="term" value="P:ERAD pathway"/>
    <property type="evidence" value="ECO:0007669"/>
    <property type="project" value="EnsemblFungi"/>
</dbReference>
<dbReference type="GO" id="GO:0051028">
    <property type="term" value="P:mRNA transport"/>
    <property type="evidence" value="ECO:0007669"/>
    <property type="project" value="UniProtKB-KW"/>
</dbReference>
<dbReference type="GO" id="GO:0051664">
    <property type="term" value="P:nuclear pore localization"/>
    <property type="evidence" value="ECO:0007669"/>
    <property type="project" value="EnsemblFungi"/>
</dbReference>
<dbReference type="GO" id="GO:0045893">
    <property type="term" value="P:positive regulation of DNA-templated transcription"/>
    <property type="evidence" value="ECO:0007669"/>
    <property type="project" value="EnsemblFungi"/>
</dbReference>
<dbReference type="GO" id="GO:1902953">
    <property type="term" value="P:positive regulation of ER to Golgi vesicle-mediated transport"/>
    <property type="evidence" value="ECO:0007669"/>
    <property type="project" value="EnsemblFungi"/>
</dbReference>
<dbReference type="GO" id="GO:0070863">
    <property type="term" value="P:positive regulation of protein exit from endoplasmic reticulum"/>
    <property type="evidence" value="ECO:0007669"/>
    <property type="project" value="EnsemblFungi"/>
</dbReference>
<dbReference type="GO" id="GO:1904263">
    <property type="term" value="P:positive regulation of TORC1 signaling"/>
    <property type="evidence" value="ECO:0007669"/>
    <property type="project" value="EnsemblFungi"/>
</dbReference>
<dbReference type="GO" id="GO:0032527">
    <property type="term" value="P:protein exit from endoplasmic reticulum"/>
    <property type="evidence" value="ECO:0007669"/>
    <property type="project" value="TreeGrafter"/>
</dbReference>
<dbReference type="GO" id="GO:0006606">
    <property type="term" value="P:protein import into nucleus"/>
    <property type="evidence" value="ECO:0007669"/>
    <property type="project" value="TreeGrafter"/>
</dbReference>
<dbReference type="FunFam" id="2.130.10.10:FF:000017">
    <property type="entry name" value="SEC13 homolog (S. cerevisiae)"/>
    <property type="match status" value="1"/>
</dbReference>
<dbReference type="Gene3D" id="2.130.10.10">
    <property type="entry name" value="YVTN repeat-like/Quinoprotein amine dehydrogenase"/>
    <property type="match status" value="1"/>
</dbReference>
<dbReference type="InterPro" id="IPR020472">
    <property type="entry name" value="G-protein_beta_WD-40_rep"/>
</dbReference>
<dbReference type="InterPro" id="IPR037363">
    <property type="entry name" value="Sec13/Seh1_fam"/>
</dbReference>
<dbReference type="InterPro" id="IPR015943">
    <property type="entry name" value="WD40/YVTN_repeat-like_dom_sf"/>
</dbReference>
<dbReference type="InterPro" id="IPR036322">
    <property type="entry name" value="WD40_repeat_dom_sf"/>
</dbReference>
<dbReference type="InterPro" id="IPR001680">
    <property type="entry name" value="WD40_rpt"/>
</dbReference>
<dbReference type="PANTHER" id="PTHR11024">
    <property type="entry name" value="NUCLEAR PORE COMPLEX PROTEIN SEC13 / SEH1 FAMILY MEMBER"/>
    <property type="match status" value="1"/>
</dbReference>
<dbReference type="PANTHER" id="PTHR11024:SF2">
    <property type="entry name" value="PROTEIN SEC13 HOMOLOG"/>
    <property type="match status" value="1"/>
</dbReference>
<dbReference type="Pfam" id="PF00400">
    <property type="entry name" value="WD40"/>
    <property type="match status" value="6"/>
</dbReference>
<dbReference type="PRINTS" id="PR00320">
    <property type="entry name" value="GPROTEINBRPT"/>
</dbReference>
<dbReference type="SMART" id="SM00320">
    <property type="entry name" value="WD40"/>
    <property type="match status" value="5"/>
</dbReference>
<dbReference type="SUPFAM" id="SSF50978">
    <property type="entry name" value="WD40 repeat-like"/>
    <property type="match status" value="1"/>
</dbReference>
<dbReference type="PROSITE" id="PS50082">
    <property type="entry name" value="WD_REPEATS_2"/>
    <property type="match status" value="4"/>
</dbReference>
<dbReference type="PROSITE" id="PS50294">
    <property type="entry name" value="WD_REPEATS_REGION"/>
    <property type="match status" value="1"/>
</dbReference>
<protein>
    <recommendedName>
        <fullName>Protein transport protein sec13</fullName>
    </recommendedName>
</protein>
<name>SEC13_ASPOR</name>
<keyword id="KW-0968">Cytoplasmic vesicle</keyword>
<keyword id="KW-0256">Endoplasmic reticulum</keyword>
<keyword id="KW-0931">ER-Golgi transport</keyword>
<keyword id="KW-0472">Membrane</keyword>
<keyword id="KW-0509">mRNA transport</keyword>
<keyword id="KW-0906">Nuclear pore complex</keyword>
<keyword id="KW-0539">Nucleus</keyword>
<keyword id="KW-0653">Protein transport</keyword>
<keyword id="KW-1185">Reference proteome</keyword>
<keyword id="KW-0677">Repeat</keyword>
<keyword id="KW-0811">Translocation</keyword>
<keyword id="KW-0813">Transport</keyword>
<keyword id="KW-0853">WD repeat</keyword>
<sequence>MHDAGLDYYGRRLATCSSDKTIKIFEIEGETHRLVETLKGHEGAVWCIAWAHPKFGTILASSSYDGKVLIWREQHQNTTSPVAVNTWTKVFDFSLHTASVNMVSWAPHESGCLLACASSDGHVSVLEFQDNSWTHQIFHAHGMGVNSISWAPAASPGSLISANPGPGQQRRFVTGGSDNLLKIWDYNSETKSYNLSQTLEGHSDWVRDVAWSPSILSKSYIASASQDKTVRIWTSDVSNPGQWASQQLEFDTVLWRVSWSPSGNILAVSGGDNKVSLWKENLKGQWEKVKDIEE</sequence>
<reference key="1">
    <citation type="journal article" date="2005" name="Nature">
        <title>Genome sequencing and analysis of Aspergillus oryzae.</title>
        <authorList>
            <person name="Machida M."/>
            <person name="Asai K."/>
            <person name="Sano M."/>
            <person name="Tanaka T."/>
            <person name="Kumagai T."/>
            <person name="Terai G."/>
            <person name="Kusumoto K."/>
            <person name="Arima T."/>
            <person name="Akita O."/>
            <person name="Kashiwagi Y."/>
            <person name="Abe K."/>
            <person name="Gomi K."/>
            <person name="Horiuchi H."/>
            <person name="Kitamoto K."/>
            <person name="Kobayashi T."/>
            <person name="Takeuchi M."/>
            <person name="Denning D.W."/>
            <person name="Galagan J.E."/>
            <person name="Nierman W.C."/>
            <person name="Yu J."/>
            <person name="Archer D.B."/>
            <person name="Bennett J.W."/>
            <person name="Bhatnagar D."/>
            <person name="Cleveland T.E."/>
            <person name="Fedorova N.D."/>
            <person name="Gotoh O."/>
            <person name="Horikawa H."/>
            <person name="Hosoyama A."/>
            <person name="Ichinomiya M."/>
            <person name="Igarashi R."/>
            <person name="Iwashita K."/>
            <person name="Juvvadi P.R."/>
            <person name="Kato M."/>
            <person name="Kato Y."/>
            <person name="Kin T."/>
            <person name="Kokubun A."/>
            <person name="Maeda H."/>
            <person name="Maeyama N."/>
            <person name="Maruyama J."/>
            <person name="Nagasaki H."/>
            <person name="Nakajima T."/>
            <person name="Oda K."/>
            <person name="Okada K."/>
            <person name="Paulsen I."/>
            <person name="Sakamoto K."/>
            <person name="Sawano T."/>
            <person name="Takahashi M."/>
            <person name="Takase K."/>
            <person name="Terabayashi Y."/>
            <person name="Wortman J.R."/>
            <person name="Yamada O."/>
            <person name="Yamagata Y."/>
            <person name="Anazawa H."/>
            <person name="Hata Y."/>
            <person name="Koide Y."/>
            <person name="Komori T."/>
            <person name="Koyama Y."/>
            <person name="Minetoki T."/>
            <person name="Suharnan S."/>
            <person name="Tanaka A."/>
            <person name="Isono K."/>
            <person name="Kuhara S."/>
            <person name="Ogasawara N."/>
            <person name="Kikuchi H."/>
        </authorList>
    </citation>
    <scope>NUCLEOTIDE SEQUENCE [LARGE SCALE GENOMIC DNA]</scope>
    <source>
        <strain>ATCC 42149 / RIB 40</strain>
    </source>
</reference>
<gene>
    <name type="primary">sec13</name>
    <name type="ORF">AO090023000986</name>
</gene>
<accession>Q2UG43</accession>
<proteinExistence type="inferred from homology"/>
<comment type="function">
    <text evidence="2">Component of the coat protein complex II (COPII) which promotes the formation of transport vesicles from the endoplasmic reticulum (ER). The coat has two main functions, the physical deformation of the endoplasmic reticulum membrane into vesicles and the selection of cargo molecules. It also functions as a component of the nuclear pore complex (NPC). NPC components, collectively referred to as nucleoporins (NUPs), can play the role of both NPC structural components and of docking or interaction partners for transiently associated nuclear transport factors. Sec13 is required for efficient mRNA export from the nucleus to the cytoplasm and for correct nuclear pore biogenesis and distribution (By similarity).</text>
</comment>
<comment type="subunit">
    <text evidence="2">The COPII coat is composed of at least 5 proteins: the sec23/24 complex, the sec13/31 complex, and the protein sar1. Component of the nuclear pore complex (NPC). NPC constitutes the exclusive means of nucleocytoplasmic transport. NPCs allow the passive diffusion of ions and small molecules and the active, nuclear transport receptor-mediated bidirectional transport of macromolecules such as proteins, RNAs, ribonucleoparticles (RNPs), and ribosomal subunits across the nuclear envelope. Due to its 8-fold rotational symmetry, all subunits are present with 8 copies or multiples thereof.</text>
</comment>
<comment type="subcellular location">
    <subcellularLocation>
        <location evidence="1">Cytoplasmic vesicle</location>
        <location evidence="1">COPII-coated vesicle membrane</location>
        <topology evidence="1">Peripheral membrane protein</topology>
        <orientation evidence="1">Cytoplasmic side</orientation>
    </subcellularLocation>
    <subcellularLocation>
        <location evidence="1">Endoplasmic reticulum membrane</location>
        <topology evidence="1">Peripheral membrane protein</topology>
        <orientation evidence="1">Cytoplasmic side</orientation>
    </subcellularLocation>
    <subcellularLocation>
        <location evidence="2">Nucleus</location>
        <location evidence="2">Nuclear pore complex</location>
    </subcellularLocation>
</comment>
<comment type="similarity">
    <text evidence="3">Belongs to the WD repeat SEC13 family.</text>
</comment>